<keyword id="KW-0963">Cytoplasm</keyword>
<keyword id="KW-0456">Lyase</keyword>
<keyword id="KW-0670">Pyruvate</keyword>
<keyword id="KW-0831">Ubiquinone biosynthesis</keyword>
<accession>B4TQQ1</accession>
<name>UBIC_SALSV</name>
<feature type="chain" id="PRO_1000186539" description="Chorismate pyruvate-lyase">
    <location>
        <begin position="1"/>
        <end position="165"/>
    </location>
</feature>
<feature type="binding site" evidence="1">
    <location>
        <position position="35"/>
    </location>
    <ligand>
        <name>substrate</name>
    </ligand>
</feature>
<feature type="binding site" evidence="1">
    <location>
        <position position="77"/>
    </location>
    <ligand>
        <name>substrate</name>
    </ligand>
</feature>
<feature type="binding site" evidence="1">
    <location>
        <position position="115"/>
    </location>
    <ligand>
        <name>substrate</name>
    </ligand>
</feature>
<feature type="binding site" evidence="1">
    <location>
        <position position="156"/>
    </location>
    <ligand>
        <name>substrate</name>
    </ligand>
</feature>
<sequence>MSHPALTQLRALRYFDAIPALEPHLLDWLLLEDSMTKRFEQLGKRVSVTLIREAFVGQSEVEEASGLLPSESRYWLREILLCADGEPWLAGRTVVPESTLCGPEQVLQHLGKTPLGRYLFTSSTLTRDFIEIGRDATLWGRRSRLRLSGKPLLLTELFLPASPLY</sequence>
<reference key="1">
    <citation type="journal article" date="2011" name="J. Bacteriol.">
        <title>Comparative genomics of 28 Salmonella enterica isolates: evidence for CRISPR-mediated adaptive sublineage evolution.</title>
        <authorList>
            <person name="Fricke W.F."/>
            <person name="Mammel M.K."/>
            <person name="McDermott P.F."/>
            <person name="Tartera C."/>
            <person name="White D.G."/>
            <person name="Leclerc J.E."/>
            <person name="Ravel J."/>
            <person name="Cebula T.A."/>
        </authorList>
    </citation>
    <scope>NUCLEOTIDE SEQUENCE [LARGE SCALE GENOMIC DNA]</scope>
    <source>
        <strain>CVM19633</strain>
    </source>
</reference>
<organism>
    <name type="scientific">Salmonella schwarzengrund (strain CVM19633)</name>
    <dbReference type="NCBI Taxonomy" id="439843"/>
    <lineage>
        <taxon>Bacteria</taxon>
        <taxon>Pseudomonadati</taxon>
        <taxon>Pseudomonadota</taxon>
        <taxon>Gammaproteobacteria</taxon>
        <taxon>Enterobacterales</taxon>
        <taxon>Enterobacteriaceae</taxon>
        <taxon>Salmonella</taxon>
    </lineage>
</organism>
<gene>
    <name evidence="1" type="primary">ubiC</name>
    <name type="ordered locus">SeSA_A4425</name>
</gene>
<dbReference type="EC" id="4.1.3.40" evidence="1"/>
<dbReference type="EMBL" id="CP001127">
    <property type="protein sequence ID" value="ACF91067.1"/>
    <property type="molecule type" value="Genomic_DNA"/>
</dbReference>
<dbReference type="RefSeq" id="WP_000019217.1">
    <property type="nucleotide sequence ID" value="NC_011094.1"/>
</dbReference>
<dbReference type="SMR" id="B4TQQ1"/>
<dbReference type="KEGG" id="sew:SeSA_A4425"/>
<dbReference type="HOGENOM" id="CLU_096824_1_0_6"/>
<dbReference type="UniPathway" id="UPA00232"/>
<dbReference type="Proteomes" id="UP000001865">
    <property type="component" value="Chromosome"/>
</dbReference>
<dbReference type="GO" id="GO:0005829">
    <property type="term" value="C:cytosol"/>
    <property type="evidence" value="ECO:0007669"/>
    <property type="project" value="TreeGrafter"/>
</dbReference>
<dbReference type="GO" id="GO:0008813">
    <property type="term" value="F:chorismate lyase activity"/>
    <property type="evidence" value="ECO:0007669"/>
    <property type="project" value="UniProtKB-UniRule"/>
</dbReference>
<dbReference type="GO" id="GO:0042866">
    <property type="term" value="P:pyruvate biosynthetic process"/>
    <property type="evidence" value="ECO:0007669"/>
    <property type="project" value="UniProtKB-UniRule"/>
</dbReference>
<dbReference type="GO" id="GO:0006744">
    <property type="term" value="P:ubiquinone biosynthetic process"/>
    <property type="evidence" value="ECO:0007669"/>
    <property type="project" value="UniProtKB-UniRule"/>
</dbReference>
<dbReference type="FunFam" id="3.40.1410.10:FF:000002">
    <property type="entry name" value="Chorismate pyruvate-lyase"/>
    <property type="match status" value="1"/>
</dbReference>
<dbReference type="Gene3D" id="3.40.1410.10">
    <property type="entry name" value="Chorismate lyase-like"/>
    <property type="match status" value="1"/>
</dbReference>
<dbReference type="HAMAP" id="MF_01632">
    <property type="entry name" value="UbiC"/>
    <property type="match status" value="1"/>
</dbReference>
<dbReference type="InterPro" id="IPR007440">
    <property type="entry name" value="Chorismate--pyruvate_lyase"/>
</dbReference>
<dbReference type="InterPro" id="IPR028978">
    <property type="entry name" value="Chorismate_lyase_/UTRA_dom_sf"/>
</dbReference>
<dbReference type="NCBIfam" id="NF008656">
    <property type="entry name" value="PRK11655.1"/>
    <property type="match status" value="1"/>
</dbReference>
<dbReference type="PANTHER" id="PTHR38683">
    <property type="entry name" value="CHORISMATE PYRUVATE-LYASE"/>
    <property type="match status" value="1"/>
</dbReference>
<dbReference type="PANTHER" id="PTHR38683:SF1">
    <property type="entry name" value="CHORISMATE PYRUVATE-LYASE"/>
    <property type="match status" value="1"/>
</dbReference>
<dbReference type="Pfam" id="PF04345">
    <property type="entry name" value="Chor_lyase"/>
    <property type="match status" value="1"/>
</dbReference>
<dbReference type="SUPFAM" id="SSF64288">
    <property type="entry name" value="Chorismate lyase-like"/>
    <property type="match status" value="1"/>
</dbReference>
<comment type="function">
    <text evidence="1">Removes the pyruvyl group from chorismate, with concomitant aromatization of the ring, to provide 4-hydroxybenzoate (4HB) for the ubiquinone pathway.</text>
</comment>
<comment type="catalytic activity">
    <reaction evidence="1">
        <text>chorismate = 4-hydroxybenzoate + pyruvate</text>
        <dbReference type="Rhea" id="RHEA:16505"/>
        <dbReference type="ChEBI" id="CHEBI:15361"/>
        <dbReference type="ChEBI" id="CHEBI:17879"/>
        <dbReference type="ChEBI" id="CHEBI:29748"/>
        <dbReference type="EC" id="4.1.3.40"/>
    </reaction>
</comment>
<comment type="pathway">
    <text evidence="1">Cofactor biosynthesis; ubiquinone biosynthesis.</text>
</comment>
<comment type="subunit">
    <text evidence="1">Monomer.</text>
</comment>
<comment type="subcellular location">
    <subcellularLocation>
        <location evidence="1">Cytoplasm</location>
    </subcellularLocation>
</comment>
<comment type="similarity">
    <text evidence="1">Belongs to the UbiC family.</text>
</comment>
<protein>
    <recommendedName>
        <fullName evidence="1">Chorismate pyruvate-lyase</fullName>
        <shortName evidence="1">CL</shortName>
        <shortName evidence="1">CPL</shortName>
        <ecNumber evidence="1">4.1.3.40</ecNumber>
    </recommendedName>
</protein>
<proteinExistence type="inferred from homology"/>
<evidence type="ECO:0000255" key="1">
    <source>
        <dbReference type="HAMAP-Rule" id="MF_01632"/>
    </source>
</evidence>